<sequence>MSTDKKQDESIAEKDWKVELSEQEYYVCREAGTERPFTGVLLDEQRDGLYVCKCCEAPLFPSDTKFDAGCGWPSFYKQLDDGNVDYREDVSHGMRRVEIFCKQCGSHLGHVFPDGPAPTGQRYCVNSLSMTFKGEDNVEVKG</sequence>
<accession>B4RUW0</accession>
<accession>F2G566</accession>
<protein>
    <recommendedName>
        <fullName evidence="1">Peptide methionine sulfoxide reductase MsrB</fullName>
        <ecNumber evidence="1">1.8.4.12</ecNumber>
    </recommendedName>
    <alternativeName>
        <fullName evidence="1">Peptide-methionine (R)-S-oxide reductase</fullName>
    </alternativeName>
</protein>
<evidence type="ECO:0000255" key="1">
    <source>
        <dbReference type="HAMAP-Rule" id="MF_01400"/>
    </source>
</evidence>
<evidence type="ECO:0000255" key="2">
    <source>
        <dbReference type="PROSITE-ProRule" id="PRU01126"/>
    </source>
</evidence>
<comment type="catalytic activity">
    <reaction evidence="1">
        <text>L-methionyl-[protein] + [thioredoxin]-disulfide + H2O = L-methionyl-(R)-S-oxide-[protein] + [thioredoxin]-dithiol</text>
        <dbReference type="Rhea" id="RHEA:24164"/>
        <dbReference type="Rhea" id="RHEA-COMP:10698"/>
        <dbReference type="Rhea" id="RHEA-COMP:10700"/>
        <dbReference type="Rhea" id="RHEA-COMP:12313"/>
        <dbReference type="Rhea" id="RHEA-COMP:12314"/>
        <dbReference type="ChEBI" id="CHEBI:15377"/>
        <dbReference type="ChEBI" id="CHEBI:16044"/>
        <dbReference type="ChEBI" id="CHEBI:29950"/>
        <dbReference type="ChEBI" id="CHEBI:45764"/>
        <dbReference type="ChEBI" id="CHEBI:50058"/>
        <dbReference type="EC" id="1.8.4.12"/>
    </reaction>
</comment>
<comment type="cofactor">
    <cofactor evidence="1">
        <name>Zn(2+)</name>
        <dbReference type="ChEBI" id="CHEBI:29105"/>
    </cofactor>
    <text evidence="1">Binds 1 zinc ion per subunit. The zinc ion is important for the structural integrity of the protein.</text>
</comment>
<comment type="similarity">
    <text evidence="1">Belongs to the MsrB Met sulfoxide reductase family.</text>
</comment>
<feature type="chain" id="PRO_1000145349" description="Peptide methionine sulfoxide reductase MsrB">
    <location>
        <begin position="1"/>
        <end position="142"/>
    </location>
</feature>
<feature type="domain" description="MsrB" evidence="2">
    <location>
        <begin position="13"/>
        <end position="135"/>
    </location>
</feature>
<feature type="active site" description="Nucleophile" evidence="2">
    <location>
        <position position="124"/>
    </location>
</feature>
<feature type="binding site" evidence="2">
    <location>
        <position position="52"/>
    </location>
    <ligand>
        <name>Zn(2+)</name>
        <dbReference type="ChEBI" id="CHEBI:29105"/>
    </ligand>
</feature>
<feature type="binding site" evidence="2">
    <location>
        <position position="55"/>
    </location>
    <ligand>
        <name>Zn(2+)</name>
        <dbReference type="ChEBI" id="CHEBI:29105"/>
    </ligand>
</feature>
<feature type="binding site" evidence="2">
    <location>
        <position position="101"/>
    </location>
    <ligand>
        <name>Zn(2+)</name>
        <dbReference type="ChEBI" id="CHEBI:29105"/>
    </ligand>
</feature>
<feature type="binding site" evidence="2">
    <location>
        <position position="104"/>
    </location>
    <ligand>
        <name>Zn(2+)</name>
        <dbReference type="ChEBI" id="CHEBI:29105"/>
    </ligand>
</feature>
<proteinExistence type="inferred from homology"/>
<dbReference type="EC" id="1.8.4.12" evidence="1"/>
<dbReference type="EMBL" id="CP001103">
    <property type="protein sequence ID" value="AEA98466.1"/>
    <property type="molecule type" value="Genomic_DNA"/>
</dbReference>
<dbReference type="RefSeq" id="WP_012518785.1">
    <property type="nucleotide sequence ID" value="NC_011138.3"/>
</dbReference>
<dbReference type="SMR" id="B4RUW0"/>
<dbReference type="KEGG" id="amc:MADE_1011650"/>
<dbReference type="HOGENOM" id="CLU_031040_8_5_6"/>
<dbReference type="Proteomes" id="UP000001870">
    <property type="component" value="Chromosome"/>
</dbReference>
<dbReference type="GO" id="GO:0005737">
    <property type="term" value="C:cytoplasm"/>
    <property type="evidence" value="ECO:0007669"/>
    <property type="project" value="TreeGrafter"/>
</dbReference>
<dbReference type="GO" id="GO:0033743">
    <property type="term" value="F:peptide-methionine (R)-S-oxide reductase activity"/>
    <property type="evidence" value="ECO:0007669"/>
    <property type="project" value="UniProtKB-UniRule"/>
</dbReference>
<dbReference type="GO" id="GO:0008270">
    <property type="term" value="F:zinc ion binding"/>
    <property type="evidence" value="ECO:0007669"/>
    <property type="project" value="UniProtKB-UniRule"/>
</dbReference>
<dbReference type="GO" id="GO:0030091">
    <property type="term" value="P:protein repair"/>
    <property type="evidence" value="ECO:0007669"/>
    <property type="project" value="InterPro"/>
</dbReference>
<dbReference type="GO" id="GO:0006979">
    <property type="term" value="P:response to oxidative stress"/>
    <property type="evidence" value="ECO:0007669"/>
    <property type="project" value="InterPro"/>
</dbReference>
<dbReference type="FunFam" id="2.170.150.20:FF:000001">
    <property type="entry name" value="Peptide methionine sulfoxide reductase MsrB"/>
    <property type="match status" value="1"/>
</dbReference>
<dbReference type="Gene3D" id="2.170.150.20">
    <property type="entry name" value="Peptide methionine sulfoxide reductase"/>
    <property type="match status" value="1"/>
</dbReference>
<dbReference type="HAMAP" id="MF_01400">
    <property type="entry name" value="MsrB"/>
    <property type="match status" value="1"/>
</dbReference>
<dbReference type="InterPro" id="IPR028427">
    <property type="entry name" value="Met_Sox_Rdtase_MsrB"/>
</dbReference>
<dbReference type="InterPro" id="IPR002579">
    <property type="entry name" value="Met_Sox_Rdtase_MsrB_dom"/>
</dbReference>
<dbReference type="InterPro" id="IPR011057">
    <property type="entry name" value="Mss4-like_sf"/>
</dbReference>
<dbReference type="NCBIfam" id="TIGR00357">
    <property type="entry name" value="peptide-methionine (R)-S-oxide reductase MsrB"/>
    <property type="match status" value="1"/>
</dbReference>
<dbReference type="PANTHER" id="PTHR10173">
    <property type="entry name" value="METHIONINE SULFOXIDE REDUCTASE"/>
    <property type="match status" value="1"/>
</dbReference>
<dbReference type="PANTHER" id="PTHR10173:SF52">
    <property type="entry name" value="METHIONINE-R-SULFOXIDE REDUCTASE B1"/>
    <property type="match status" value="1"/>
</dbReference>
<dbReference type="Pfam" id="PF01641">
    <property type="entry name" value="SelR"/>
    <property type="match status" value="1"/>
</dbReference>
<dbReference type="SUPFAM" id="SSF51316">
    <property type="entry name" value="Mss4-like"/>
    <property type="match status" value="1"/>
</dbReference>
<dbReference type="PROSITE" id="PS51790">
    <property type="entry name" value="MSRB"/>
    <property type="match status" value="1"/>
</dbReference>
<keyword id="KW-0479">Metal-binding</keyword>
<keyword id="KW-0560">Oxidoreductase</keyword>
<keyword id="KW-0862">Zinc</keyword>
<reference key="1">
    <citation type="journal article" date="2008" name="ISME J.">
        <title>Comparative genomics of two ecotypes of the marine planktonic copiotroph Alteromonas macleodii suggests alternative lifestyles associated with different kinds of particulate organic matter.</title>
        <authorList>
            <person name="Ivars-Martinez E."/>
            <person name="Martin-Cuadrado A.-B."/>
            <person name="D'Auria G."/>
            <person name="Mira A."/>
            <person name="Ferriera S."/>
            <person name="Johnson J."/>
            <person name="Friedman R."/>
            <person name="Rodriguez-Valera F."/>
        </authorList>
    </citation>
    <scope>NUCLEOTIDE SEQUENCE [LARGE SCALE GENOMIC DNA]</scope>
    <source>
        <strain>DSM 17117 / CIP 110805 / LMG 28347 / Deep ecotype</strain>
    </source>
</reference>
<organism>
    <name type="scientific">Alteromonas mediterranea (strain DSM 17117 / CIP 110805 / LMG 28347 / Deep ecotype)</name>
    <dbReference type="NCBI Taxonomy" id="1774373"/>
    <lineage>
        <taxon>Bacteria</taxon>
        <taxon>Pseudomonadati</taxon>
        <taxon>Pseudomonadota</taxon>
        <taxon>Gammaproteobacteria</taxon>
        <taxon>Alteromonadales</taxon>
        <taxon>Alteromonadaceae</taxon>
        <taxon>Alteromonas/Salinimonas group</taxon>
        <taxon>Alteromonas</taxon>
    </lineage>
</organism>
<gene>
    <name evidence="1" type="primary">msrB</name>
    <name type="ordered locus">MADE_1011650</name>
</gene>
<name>MSRB_ALTMD</name>